<protein>
    <recommendedName>
        <fullName>Putative pentatricopeptide repeat-containing protein At1g03510</fullName>
    </recommendedName>
</protein>
<gene>
    <name type="primary">PCMP-E3</name>
    <name type="ordered locus">At1g03510</name>
    <name type="ORF">F21B7.13</name>
</gene>
<proteinExistence type="inferred from homology"/>
<organism>
    <name type="scientific">Arabidopsis thaliana</name>
    <name type="common">Mouse-ear cress</name>
    <dbReference type="NCBI Taxonomy" id="3702"/>
    <lineage>
        <taxon>Eukaryota</taxon>
        <taxon>Viridiplantae</taxon>
        <taxon>Streptophyta</taxon>
        <taxon>Embryophyta</taxon>
        <taxon>Tracheophyta</taxon>
        <taxon>Spermatophyta</taxon>
        <taxon>Magnoliopsida</taxon>
        <taxon>eudicotyledons</taxon>
        <taxon>Gunneridae</taxon>
        <taxon>Pentapetalae</taxon>
        <taxon>rosids</taxon>
        <taxon>malvids</taxon>
        <taxon>Brassicales</taxon>
        <taxon>Brassicaceae</taxon>
        <taxon>Camelineae</taxon>
        <taxon>Arabidopsis</taxon>
    </lineage>
</organism>
<sequence>MSSSYASSCTKLISLTKQLSSYANQGNHEQALNLFLQMHSSFALPLDAHVFSLALKSCAAAFRPVLGGSVHAHSVKSNFLSNPFVGCALLDMYGKCLSVSHARKLFDEIPQRNAVVWNAMISHYTHCGKVKEAVELYEAMDVMPNESSFNAIIKGLVGTEDGSYRAIEFYRKMIEFRFKPNLITLLALVSACSAIGAFRLIKEIHSYAFRNLIEPHPQLKSGLVEAYGRCGSIVYVQLVFDSMEDRDVVAWSSLISAYALHGDAESALKTFQEMELAKVTPDDIAFLNVLKACSHAGLADEALVYFKRMQGDYGLRASKDHYSCLVDVLSRVGRFEEAYKVIQAMPEKPTAKTWGALLGACRNYGEIELAEIAARELLMVEPENPANYVLLGKIYMSVGRQEEAERLRLKMKESGVKVSPGSSWCLFKD</sequence>
<accession>Q9LR72</accession>
<reference key="1">
    <citation type="journal article" date="2000" name="Nature">
        <title>Sequence and analysis of chromosome 1 of the plant Arabidopsis thaliana.</title>
        <authorList>
            <person name="Theologis A."/>
            <person name="Ecker J.R."/>
            <person name="Palm C.J."/>
            <person name="Federspiel N.A."/>
            <person name="Kaul S."/>
            <person name="White O."/>
            <person name="Alonso J."/>
            <person name="Altafi H."/>
            <person name="Araujo R."/>
            <person name="Bowman C.L."/>
            <person name="Brooks S.Y."/>
            <person name="Buehler E."/>
            <person name="Chan A."/>
            <person name="Chao Q."/>
            <person name="Chen H."/>
            <person name="Cheuk R.F."/>
            <person name="Chin C.W."/>
            <person name="Chung M.K."/>
            <person name="Conn L."/>
            <person name="Conway A.B."/>
            <person name="Conway A.R."/>
            <person name="Creasy T.H."/>
            <person name="Dewar K."/>
            <person name="Dunn P."/>
            <person name="Etgu P."/>
            <person name="Feldblyum T.V."/>
            <person name="Feng J.-D."/>
            <person name="Fong B."/>
            <person name="Fujii C.Y."/>
            <person name="Gill J.E."/>
            <person name="Goldsmith A.D."/>
            <person name="Haas B."/>
            <person name="Hansen N.F."/>
            <person name="Hughes B."/>
            <person name="Huizar L."/>
            <person name="Hunter J.L."/>
            <person name="Jenkins J."/>
            <person name="Johnson-Hopson C."/>
            <person name="Khan S."/>
            <person name="Khaykin E."/>
            <person name="Kim C.J."/>
            <person name="Koo H.L."/>
            <person name="Kremenetskaia I."/>
            <person name="Kurtz D.B."/>
            <person name="Kwan A."/>
            <person name="Lam B."/>
            <person name="Langin-Hooper S."/>
            <person name="Lee A."/>
            <person name="Lee J.M."/>
            <person name="Lenz C.A."/>
            <person name="Li J.H."/>
            <person name="Li Y.-P."/>
            <person name="Lin X."/>
            <person name="Liu S.X."/>
            <person name="Liu Z.A."/>
            <person name="Luros J.S."/>
            <person name="Maiti R."/>
            <person name="Marziali A."/>
            <person name="Militscher J."/>
            <person name="Miranda M."/>
            <person name="Nguyen M."/>
            <person name="Nierman W.C."/>
            <person name="Osborne B.I."/>
            <person name="Pai G."/>
            <person name="Peterson J."/>
            <person name="Pham P.K."/>
            <person name="Rizzo M."/>
            <person name="Rooney T."/>
            <person name="Rowley D."/>
            <person name="Sakano H."/>
            <person name="Salzberg S.L."/>
            <person name="Schwartz J.R."/>
            <person name="Shinn P."/>
            <person name="Southwick A.M."/>
            <person name="Sun H."/>
            <person name="Tallon L.J."/>
            <person name="Tambunga G."/>
            <person name="Toriumi M.J."/>
            <person name="Town C.D."/>
            <person name="Utterback T."/>
            <person name="Van Aken S."/>
            <person name="Vaysberg M."/>
            <person name="Vysotskaia V.S."/>
            <person name="Walker M."/>
            <person name="Wu D."/>
            <person name="Yu G."/>
            <person name="Fraser C.M."/>
            <person name="Venter J.C."/>
            <person name="Davis R.W."/>
        </authorList>
    </citation>
    <scope>NUCLEOTIDE SEQUENCE [LARGE SCALE GENOMIC DNA]</scope>
    <source>
        <strain>cv. Columbia</strain>
    </source>
</reference>
<reference key="2">
    <citation type="journal article" date="2017" name="Plant J.">
        <title>Araport11: a complete reannotation of the Arabidopsis thaliana reference genome.</title>
        <authorList>
            <person name="Cheng C.Y."/>
            <person name="Krishnakumar V."/>
            <person name="Chan A.P."/>
            <person name="Thibaud-Nissen F."/>
            <person name="Schobel S."/>
            <person name="Town C.D."/>
        </authorList>
    </citation>
    <scope>GENOME REANNOTATION</scope>
    <source>
        <strain>cv. Columbia</strain>
    </source>
</reference>
<reference key="3">
    <citation type="journal article" date="2000" name="Plant Mol. Biol.">
        <title>In Arabidopsis thaliana, 1% of the genome codes for a novel protein family unique to plants.</title>
        <authorList>
            <person name="Aubourg S."/>
            <person name="Boudet N."/>
            <person name="Kreis M."/>
            <person name="Lecharny A."/>
        </authorList>
    </citation>
    <scope>GENE FAMILY</scope>
</reference>
<reference key="4">
    <citation type="journal article" date="2004" name="Plant Cell">
        <title>Genome-wide analysis of Arabidopsis pentatricopeptide repeat proteins reveals their essential role in organelle biogenesis.</title>
        <authorList>
            <person name="Lurin C."/>
            <person name="Andres C."/>
            <person name="Aubourg S."/>
            <person name="Bellaoui M."/>
            <person name="Bitton F."/>
            <person name="Bruyere C."/>
            <person name="Caboche M."/>
            <person name="Debast C."/>
            <person name="Gualberto J."/>
            <person name="Hoffmann B."/>
            <person name="Lecharny A."/>
            <person name="Le Ret M."/>
            <person name="Martin-Magniette M.-L."/>
            <person name="Mireau H."/>
            <person name="Peeters N."/>
            <person name="Renou J.-P."/>
            <person name="Szurek B."/>
            <person name="Taconnat L."/>
            <person name="Small I."/>
        </authorList>
    </citation>
    <scope>GENE FAMILY</scope>
</reference>
<evidence type="ECO:0000305" key="1"/>
<feature type="chain" id="PRO_0000342748" description="Putative pentatricopeptide repeat-containing protein At1g03510">
    <location>
        <begin position="1"/>
        <end position="429"/>
    </location>
</feature>
<feature type="repeat" description="PPR 1">
    <location>
        <begin position="11"/>
        <end position="45"/>
    </location>
</feature>
<feature type="repeat" description="PPR 2">
    <location>
        <begin position="47"/>
        <end position="81"/>
    </location>
</feature>
<feature type="repeat" description="PPR 3">
    <location>
        <begin position="82"/>
        <end position="112"/>
    </location>
</feature>
<feature type="repeat" description="PPR 4">
    <location>
        <begin position="113"/>
        <end position="147"/>
    </location>
</feature>
<feature type="repeat" description="PPR 5">
    <location>
        <begin position="148"/>
        <end position="180"/>
    </location>
</feature>
<feature type="repeat" description="PPR 6">
    <location>
        <begin position="181"/>
        <end position="215"/>
    </location>
</feature>
<feature type="repeat" description="PPR 7">
    <location>
        <begin position="216"/>
        <end position="246"/>
    </location>
</feature>
<feature type="repeat" description="PPR 8">
    <location>
        <begin position="247"/>
        <end position="281"/>
    </location>
</feature>
<feature type="repeat" description="PPR 9">
    <location>
        <begin position="282"/>
        <end position="312"/>
    </location>
</feature>
<feature type="repeat" description="PPR 10">
    <location>
        <begin position="318"/>
        <end position="348"/>
    </location>
</feature>
<feature type="region of interest" description="Type E motif">
    <location>
        <begin position="353"/>
        <end position="428"/>
    </location>
</feature>
<dbReference type="EMBL" id="AC002560">
    <property type="protein sequence ID" value="AAF86535.1"/>
    <property type="molecule type" value="Genomic_DNA"/>
</dbReference>
<dbReference type="EMBL" id="CP002684">
    <property type="protein sequence ID" value="AEE27580.1"/>
    <property type="molecule type" value="Genomic_DNA"/>
</dbReference>
<dbReference type="PIR" id="T00907">
    <property type="entry name" value="T00907"/>
</dbReference>
<dbReference type="RefSeq" id="NP_171850.1">
    <property type="nucleotide sequence ID" value="NM_100233.2"/>
</dbReference>
<dbReference type="SMR" id="Q9LR72"/>
<dbReference type="FunCoup" id="Q9LR72">
    <property type="interactions" value="133"/>
</dbReference>
<dbReference type="PaxDb" id="3702-AT1G03510.1"/>
<dbReference type="ProteomicsDB" id="236586"/>
<dbReference type="EnsemblPlants" id="AT1G03510.1">
    <property type="protein sequence ID" value="AT1G03510.1"/>
    <property type="gene ID" value="AT1G03510"/>
</dbReference>
<dbReference type="GeneID" id="839478"/>
<dbReference type="Gramene" id="AT1G03510.1">
    <property type="protein sequence ID" value="AT1G03510.1"/>
    <property type="gene ID" value="AT1G03510"/>
</dbReference>
<dbReference type="KEGG" id="ath:AT1G03510"/>
<dbReference type="Araport" id="AT1G03510"/>
<dbReference type="TAIR" id="AT1G03510"/>
<dbReference type="eggNOG" id="KOG4197">
    <property type="taxonomic scope" value="Eukaryota"/>
</dbReference>
<dbReference type="HOGENOM" id="CLU_002706_0_0_1"/>
<dbReference type="InParanoid" id="Q9LR72"/>
<dbReference type="OMA" id="LFRHMEL"/>
<dbReference type="PhylomeDB" id="Q9LR72"/>
<dbReference type="PRO" id="PR:Q9LR72"/>
<dbReference type="Proteomes" id="UP000006548">
    <property type="component" value="Chromosome 1"/>
</dbReference>
<dbReference type="ExpressionAtlas" id="Q9LR72">
    <property type="expression patterns" value="baseline and differential"/>
</dbReference>
<dbReference type="GO" id="GO:0003723">
    <property type="term" value="F:RNA binding"/>
    <property type="evidence" value="ECO:0007669"/>
    <property type="project" value="InterPro"/>
</dbReference>
<dbReference type="GO" id="GO:0009451">
    <property type="term" value="P:RNA modification"/>
    <property type="evidence" value="ECO:0007669"/>
    <property type="project" value="InterPro"/>
</dbReference>
<dbReference type="FunFam" id="1.25.40.10:FF:000459">
    <property type="entry name" value="Pentatricopeptide repeat-containing protein"/>
    <property type="match status" value="1"/>
</dbReference>
<dbReference type="FunFam" id="1.25.40.10:FF:000636">
    <property type="entry name" value="Pentatricopeptide repeat-containing protein"/>
    <property type="match status" value="1"/>
</dbReference>
<dbReference type="FunFam" id="1.25.40.10:FF:001036">
    <property type="entry name" value="Putative pentatricopeptide repeat-containing protein At1g03510"/>
    <property type="match status" value="1"/>
</dbReference>
<dbReference type="Gene3D" id="1.25.40.10">
    <property type="entry name" value="Tetratricopeptide repeat domain"/>
    <property type="match status" value="3"/>
</dbReference>
<dbReference type="InterPro" id="IPR046848">
    <property type="entry name" value="E_motif"/>
</dbReference>
<dbReference type="InterPro" id="IPR002885">
    <property type="entry name" value="Pentatricopeptide_rpt"/>
</dbReference>
<dbReference type="InterPro" id="IPR046960">
    <property type="entry name" value="PPR_At4g14850-like_plant"/>
</dbReference>
<dbReference type="InterPro" id="IPR011990">
    <property type="entry name" value="TPR-like_helical_dom_sf"/>
</dbReference>
<dbReference type="NCBIfam" id="TIGR00756">
    <property type="entry name" value="PPR"/>
    <property type="match status" value="3"/>
</dbReference>
<dbReference type="PANTHER" id="PTHR47926">
    <property type="entry name" value="PENTATRICOPEPTIDE REPEAT-CONTAINING PROTEIN"/>
    <property type="match status" value="1"/>
</dbReference>
<dbReference type="PANTHER" id="PTHR47926:SF426">
    <property type="entry name" value="TETRATRICOPEPTIDE-LIKE HELICAL DOMAIN SUPERFAMILY, DYW DOMAIN-CONTAINING PROTEIN"/>
    <property type="match status" value="1"/>
</dbReference>
<dbReference type="Pfam" id="PF20431">
    <property type="entry name" value="E_motif"/>
    <property type="match status" value="1"/>
</dbReference>
<dbReference type="Pfam" id="PF01535">
    <property type="entry name" value="PPR"/>
    <property type="match status" value="3"/>
</dbReference>
<dbReference type="Pfam" id="PF13041">
    <property type="entry name" value="PPR_2"/>
    <property type="match status" value="2"/>
</dbReference>
<dbReference type="SUPFAM" id="SSF48452">
    <property type="entry name" value="TPR-like"/>
    <property type="match status" value="2"/>
</dbReference>
<dbReference type="PROSITE" id="PS51375">
    <property type="entry name" value="PPR"/>
    <property type="match status" value="10"/>
</dbReference>
<name>PPR7_ARATH</name>
<comment type="similarity">
    <text evidence="1">Belongs to the PPR family. PCMP-E subfamily.</text>
</comment>
<comment type="online information" name="Pentatricopeptide repeat proteins">
    <link uri="https://ppr.plantenergy.uwa.edu.au"/>
</comment>
<keyword id="KW-1185">Reference proteome</keyword>
<keyword id="KW-0677">Repeat</keyword>